<gene>
    <name evidence="1" type="primary">gpmB</name>
    <name type="ordered locus">SSON_4545</name>
</gene>
<keyword id="KW-0324">Glycolysis</keyword>
<keyword id="KW-0413">Isomerase</keyword>
<keyword id="KW-1185">Reference proteome</keyword>
<feature type="chain" id="PRO_1000064134" description="Probable phosphoglycerate mutase GpmB">
    <location>
        <begin position="1"/>
        <end position="215"/>
    </location>
</feature>
<feature type="active site" description="Tele-phosphohistidine intermediate" evidence="1">
    <location>
        <position position="9"/>
    </location>
</feature>
<feature type="active site" description="Proton donor/acceptor" evidence="1">
    <location>
        <position position="82"/>
    </location>
</feature>
<feature type="binding site" evidence="1">
    <location>
        <begin position="8"/>
        <end position="15"/>
    </location>
    <ligand>
        <name>substrate</name>
    </ligand>
</feature>
<feature type="binding site" evidence="1">
    <location>
        <begin position="21"/>
        <end position="22"/>
    </location>
    <ligand>
        <name>substrate</name>
    </ligand>
</feature>
<feature type="binding site" evidence="1">
    <location>
        <position position="58"/>
    </location>
    <ligand>
        <name>substrate</name>
    </ligand>
</feature>
<feature type="binding site" evidence="1">
    <location>
        <position position="60"/>
    </location>
    <ligand>
        <name>substrate</name>
    </ligand>
</feature>
<feature type="binding site" evidence="1">
    <location>
        <begin position="82"/>
        <end position="85"/>
    </location>
    <ligand>
        <name>substrate</name>
    </ligand>
</feature>
<feature type="binding site" evidence="1">
    <location>
        <begin position="104"/>
        <end position="105"/>
    </location>
    <ligand>
        <name>substrate</name>
    </ligand>
</feature>
<feature type="binding site" evidence="1">
    <location>
        <begin position="151"/>
        <end position="152"/>
    </location>
    <ligand>
        <name>substrate</name>
    </ligand>
</feature>
<feature type="site" description="Transition state stabilizer" evidence="1">
    <location>
        <position position="150"/>
    </location>
</feature>
<evidence type="ECO:0000255" key="1">
    <source>
        <dbReference type="HAMAP-Rule" id="MF_01040"/>
    </source>
</evidence>
<protein>
    <recommendedName>
        <fullName evidence="1">Probable phosphoglycerate mutase GpmB</fullName>
        <ecNumber evidence="1">5.4.2.-</ecNumber>
    </recommendedName>
    <alternativeName>
        <fullName evidence="1">PGAM</fullName>
    </alternativeName>
    <alternativeName>
        <fullName evidence="1">Phosphoglyceromutase</fullName>
    </alternativeName>
</protein>
<name>GPMB_SHISS</name>
<dbReference type="EC" id="5.4.2.-" evidence="1"/>
<dbReference type="EMBL" id="CP000038">
    <property type="protein sequence ID" value="AAZ91013.1"/>
    <property type="molecule type" value="Genomic_DNA"/>
</dbReference>
<dbReference type="RefSeq" id="WP_000942344.1">
    <property type="nucleotide sequence ID" value="NC_007384.1"/>
</dbReference>
<dbReference type="SMR" id="Q3YTZ9"/>
<dbReference type="GeneID" id="93777450"/>
<dbReference type="KEGG" id="ssn:SSON_4545"/>
<dbReference type="HOGENOM" id="CLU_033323_9_5_6"/>
<dbReference type="UniPathway" id="UPA00109">
    <property type="reaction ID" value="UER00186"/>
</dbReference>
<dbReference type="Proteomes" id="UP000002529">
    <property type="component" value="Chromosome"/>
</dbReference>
<dbReference type="GO" id="GO:0005737">
    <property type="term" value="C:cytoplasm"/>
    <property type="evidence" value="ECO:0007669"/>
    <property type="project" value="TreeGrafter"/>
</dbReference>
<dbReference type="GO" id="GO:0016791">
    <property type="term" value="F:phosphatase activity"/>
    <property type="evidence" value="ECO:0007669"/>
    <property type="project" value="TreeGrafter"/>
</dbReference>
<dbReference type="GO" id="GO:0004619">
    <property type="term" value="F:phosphoglycerate mutase activity"/>
    <property type="evidence" value="ECO:0007669"/>
    <property type="project" value="UniProtKB-UniRule"/>
</dbReference>
<dbReference type="GO" id="GO:0006096">
    <property type="term" value="P:glycolytic process"/>
    <property type="evidence" value="ECO:0007669"/>
    <property type="project" value="UniProtKB-UniRule"/>
</dbReference>
<dbReference type="CDD" id="cd07067">
    <property type="entry name" value="HP_PGM_like"/>
    <property type="match status" value="1"/>
</dbReference>
<dbReference type="Gene3D" id="3.40.50.1240">
    <property type="entry name" value="Phosphoglycerate mutase-like"/>
    <property type="match status" value="1"/>
</dbReference>
<dbReference type="HAMAP" id="MF_01040">
    <property type="entry name" value="PGAM_GpmB"/>
    <property type="match status" value="1"/>
</dbReference>
<dbReference type="InterPro" id="IPR013078">
    <property type="entry name" value="His_Pase_superF_clade-1"/>
</dbReference>
<dbReference type="InterPro" id="IPR029033">
    <property type="entry name" value="His_PPase_superfam"/>
</dbReference>
<dbReference type="InterPro" id="IPR001345">
    <property type="entry name" value="PG/BPGM_mutase_AS"/>
</dbReference>
<dbReference type="InterPro" id="IPR050275">
    <property type="entry name" value="PGM_Phosphatase"/>
</dbReference>
<dbReference type="InterPro" id="IPR023086">
    <property type="entry name" value="Phosphoglycerate_mutase_GpmB"/>
</dbReference>
<dbReference type="NCBIfam" id="NF002901">
    <property type="entry name" value="PRK03482.1"/>
    <property type="match status" value="1"/>
</dbReference>
<dbReference type="PANTHER" id="PTHR48100">
    <property type="entry name" value="BROAD-SPECIFICITY PHOSPHATASE YOR283W-RELATED"/>
    <property type="match status" value="1"/>
</dbReference>
<dbReference type="PANTHER" id="PTHR48100:SF1">
    <property type="entry name" value="HISTIDINE PHOSPHATASE FAMILY PROTEIN-RELATED"/>
    <property type="match status" value="1"/>
</dbReference>
<dbReference type="Pfam" id="PF00300">
    <property type="entry name" value="His_Phos_1"/>
    <property type="match status" value="1"/>
</dbReference>
<dbReference type="SMART" id="SM00855">
    <property type="entry name" value="PGAM"/>
    <property type="match status" value="1"/>
</dbReference>
<dbReference type="SUPFAM" id="SSF53254">
    <property type="entry name" value="Phosphoglycerate mutase-like"/>
    <property type="match status" value="1"/>
</dbReference>
<dbReference type="PROSITE" id="PS00175">
    <property type="entry name" value="PG_MUTASE"/>
    <property type="match status" value="1"/>
</dbReference>
<accession>Q3YTZ9</accession>
<reference key="1">
    <citation type="journal article" date="2005" name="Nucleic Acids Res.">
        <title>Genome dynamics and diversity of Shigella species, the etiologic agents of bacillary dysentery.</title>
        <authorList>
            <person name="Yang F."/>
            <person name="Yang J."/>
            <person name="Zhang X."/>
            <person name="Chen L."/>
            <person name="Jiang Y."/>
            <person name="Yan Y."/>
            <person name="Tang X."/>
            <person name="Wang J."/>
            <person name="Xiong Z."/>
            <person name="Dong J."/>
            <person name="Xue Y."/>
            <person name="Zhu Y."/>
            <person name="Xu X."/>
            <person name="Sun L."/>
            <person name="Chen S."/>
            <person name="Nie H."/>
            <person name="Peng J."/>
            <person name="Xu J."/>
            <person name="Wang Y."/>
            <person name="Yuan Z."/>
            <person name="Wen Y."/>
            <person name="Yao Z."/>
            <person name="Shen Y."/>
            <person name="Qiang B."/>
            <person name="Hou Y."/>
            <person name="Yu J."/>
            <person name="Jin Q."/>
        </authorList>
    </citation>
    <scope>NUCLEOTIDE SEQUENCE [LARGE SCALE GENOMIC DNA]</scope>
    <source>
        <strain>Ss046</strain>
    </source>
</reference>
<comment type="catalytic activity">
    <reaction evidence="1">
        <text>(2R)-2-phosphoglycerate = (2R)-3-phosphoglycerate</text>
        <dbReference type="Rhea" id="RHEA:15901"/>
        <dbReference type="ChEBI" id="CHEBI:58272"/>
        <dbReference type="ChEBI" id="CHEBI:58289"/>
    </reaction>
</comment>
<comment type="pathway">
    <text evidence="1">Carbohydrate degradation; glycolysis; pyruvate from D-glyceraldehyde 3-phosphate: step 3/5.</text>
</comment>
<comment type="similarity">
    <text evidence="1">Belongs to the phosphoglycerate mutase family. GpmB subfamily.</text>
</comment>
<sequence length="215" mass="24065">MLQVYLVRHGETQWNAERRIQGQSDSPLTAKGEQQAMQVATRAKELGITHIISSDLGRTRRTAEIIAQACGCDIIFDSRLRELNMGVLEKRHIDSLTEEEENWRRQLVNGTVDGRIPEGESMQELSDRVNAALESCRDLPQGSRPLLVSHGIALGCLVSTILGLPAWAERRLRLRNCSISRVDYQESLWLASGWVVETAGDISHLDAPALDELQR</sequence>
<organism>
    <name type="scientific">Shigella sonnei (strain Ss046)</name>
    <dbReference type="NCBI Taxonomy" id="300269"/>
    <lineage>
        <taxon>Bacteria</taxon>
        <taxon>Pseudomonadati</taxon>
        <taxon>Pseudomonadota</taxon>
        <taxon>Gammaproteobacteria</taxon>
        <taxon>Enterobacterales</taxon>
        <taxon>Enterobacteriaceae</taxon>
        <taxon>Shigella</taxon>
    </lineage>
</organism>
<proteinExistence type="inferred from homology"/>